<proteinExistence type="inferred from homology"/>
<evidence type="ECO:0000255" key="1">
    <source>
        <dbReference type="HAMAP-Rule" id="MF_01452"/>
    </source>
</evidence>
<accession>A6TVN9</accession>
<protein>
    <recommendedName>
        <fullName evidence="1">ATP-dependent helicase/deoxyribonuclease subunit B</fullName>
        <ecNumber evidence="1">3.1.-.-</ecNumber>
    </recommendedName>
    <alternativeName>
        <fullName evidence="1">ATP-dependent helicase/nuclease subunit AddB</fullName>
    </alternativeName>
</protein>
<comment type="function">
    <text evidence="1">The heterodimer acts as both an ATP-dependent DNA helicase and an ATP-dependent, dual-direction single-stranded exonuclease. Recognizes the chi site generating a DNA molecule suitable for the initiation of homologous recombination. The AddB subunit has 5' -&gt; 3' nuclease activity but not helicase activity.</text>
</comment>
<comment type="cofactor">
    <cofactor evidence="1">
        <name>Mg(2+)</name>
        <dbReference type="ChEBI" id="CHEBI:18420"/>
    </cofactor>
</comment>
<comment type="cofactor">
    <cofactor evidence="1">
        <name>[4Fe-4S] cluster</name>
        <dbReference type="ChEBI" id="CHEBI:49883"/>
    </cofactor>
    <text evidence="1">Binds 1 [4Fe-4S] cluster.</text>
</comment>
<comment type="subunit">
    <text evidence="1">Heterodimer of AddA and AddB.</text>
</comment>
<comment type="miscellaneous">
    <text evidence="1">Despite having conserved helicase domains, this subunit does not have helicase activity.</text>
</comment>
<comment type="similarity">
    <text evidence="1">Belongs to the helicase family. AddB/RexB type 1 subfamily.</text>
</comment>
<feature type="chain" id="PRO_0000379148" description="ATP-dependent helicase/deoxyribonuclease subunit B">
    <location>
        <begin position="1"/>
        <end position="1149"/>
    </location>
</feature>
<feature type="domain" description="UvrD-like helicase ATP-binding" evidence="1">
    <location>
        <begin position="1"/>
        <end position="276"/>
    </location>
</feature>
<feature type="domain" description="UvrD-like helicase C-terminal" evidence="1">
    <location>
        <begin position="273"/>
        <end position="586"/>
    </location>
</feature>
<feature type="binding site" evidence="1">
    <location>
        <begin position="8"/>
        <end position="15"/>
    </location>
    <ligand>
        <name>ATP</name>
        <dbReference type="ChEBI" id="CHEBI:30616"/>
    </ligand>
</feature>
<feature type="binding site" evidence="1">
    <location>
        <position position="786"/>
    </location>
    <ligand>
        <name>[4Fe-4S] cluster</name>
        <dbReference type="ChEBI" id="CHEBI:49883"/>
    </ligand>
</feature>
<feature type="binding site" evidence="1">
    <location>
        <position position="1105"/>
    </location>
    <ligand>
        <name>[4Fe-4S] cluster</name>
        <dbReference type="ChEBI" id="CHEBI:49883"/>
    </ligand>
</feature>
<feature type="binding site" evidence="1">
    <location>
        <position position="1108"/>
    </location>
    <ligand>
        <name>[4Fe-4S] cluster</name>
        <dbReference type="ChEBI" id="CHEBI:49883"/>
    </ligand>
</feature>
<feature type="binding site" evidence="1">
    <location>
        <position position="1114"/>
    </location>
    <ligand>
        <name>[4Fe-4S] cluster</name>
        <dbReference type="ChEBI" id="CHEBI:49883"/>
    </ligand>
</feature>
<dbReference type="EC" id="3.1.-.-" evidence="1"/>
<dbReference type="EMBL" id="CP000724">
    <property type="protein sequence ID" value="ABR50257.1"/>
    <property type="molecule type" value="Genomic_DNA"/>
</dbReference>
<dbReference type="RefSeq" id="WP_012065205.1">
    <property type="nucleotide sequence ID" value="NC_009633.1"/>
</dbReference>
<dbReference type="SMR" id="A6TVN9"/>
<dbReference type="STRING" id="293826.Amet_4176"/>
<dbReference type="KEGG" id="amt:Amet_4176"/>
<dbReference type="eggNOG" id="COG3857">
    <property type="taxonomic scope" value="Bacteria"/>
</dbReference>
<dbReference type="HOGENOM" id="CLU_007838_0_0_9"/>
<dbReference type="OrthoDB" id="9758506at2"/>
<dbReference type="Proteomes" id="UP000001572">
    <property type="component" value="Chromosome"/>
</dbReference>
<dbReference type="GO" id="GO:0051539">
    <property type="term" value="F:4 iron, 4 sulfur cluster binding"/>
    <property type="evidence" value="ECO:0007669"/>
    <property type="project" value="UniProtKB-KW"/>
</dbReference>
<dbReference type="GO" id="GO:0008409">
    <property type="term" value="F:5'-3' exonuclease activity"/>
    <property type="evidence" value="ECO:0007669"/>
    <property type="project" value="UniProtKB-UniRule"/>
</dbReference>
<dbReference type="GO" id="GO:0005524">
    <property type="term" value="F:ATP binding"/>
    <property type="evidence" value="ECO:0007669"/>
    <property type="project" value="UniProtKB-UniRule"/>
</dbReference>
<dbReference type="GO" id="GO:0003690">
    <property type="term" value="F:double-stranded DNA binding"/>
    <property type="evidence" value="ECO:0007669"/>
    <property type="project" value="UniProtKB-UniRule"/>
</dbReference>
<dbReference type="GO" id="GO:0004386">
    <property type="term" value="F:helicase activity"/>
    <property type="evidence" value="ECO:0007669"/>
    <property type="project" value="UniProtKB-KW"/>
</dbReference>
<dbReference type="GO" id="GO:0046872">
    <property type="term" value="F:metal ion binding"/>
    <property type="evidence" value="ECO:0007669"/>
    <property type="project" value="UniProtKB-KW"/>
</dbReference>
<dbReference type="GO" id="GO:0000724">
    <property type="term" value="P:double-strand break repair via homologous recombination"/>
    <property type="evidence" value="ECO:0007669"/>
    <property type="project" value="UniProtKB-UniRule"/>
</dbReference>
<dbReference type="Gene3D" id="3.90.320.10">
    <property type="match status" value="1"/>
</dbReference>
<dbReference type="Gene3D" id="6.10.140.1030">
    <property type="match status" value="1"/>
</dbReference>
<dbReference type="Gene3D" id="3.40.50.300">
    <property type="entry name" value="P-loop containing nucleotide triphosphate hydrolases"/>
    <property type="match status" value="3"/>
</dbReference>
<dbReference type="HAMAP" id="MF_01452">
    <property type="entry name" value="AddB_type1"/>
    <property type="match status" value="1"/>
</dbReference>
<dbReference type="InterPro" id="IPR049035">
    <property type="entry name" value="ADDB_N"/>
</dbReference>
<dbReference type="InterPro" id="IPR014140">
    <property type="entry name" value="DNA_helicase_suAddB"/>
</dbReference>
<dbReference type="InterPro" id="IPR014017">
    <property type="entry name" value="DNA_helicase_UvrD-like_C"/>
</dbReference>
<dbReference type="InterPro" id="IPR027417">
    <property type="entry name" value="P-loop_NTPase"/>
</dbReference>
<dbReference type="InterPro" id="IPR011604">
    <property type="entry name" value="PDDEXK-like_dom_sf"/>
</dbReference>
<dbReference type="InterPro" id="IPR038726">
    <property type="entry name" value="PDDEXK_AddAB-type"/>
</dbReference>
<dbReference type="InterPro" id="IPR011335">
    <property type="entry name" value="Restrct_endonuc-II-like"/>
</dbReference>
<dbReference type="NCBIfam" id="TIGR02773">
    <property type="entry name" value="addB_Gpos"/>
    <property type="match status" value="1"/>
</dbReference>
<dbReference type="PANTHER" id="PTHR30591">
    <property type="entry name" value="RECBCD ENZYME SUBUNIT RECC"/>
    <property type="match status" value="1"/>
</dbReference>
<dbReference type="PANTHER" id="PTHR30591:SF1">
    <property type="entry name" value="RECBCD ENZYME SUBUNIT RECC"/>
    <property type="match status" value="1"/>
</dbReference>
<dbReference type="Pfam" id="PF21445">
    <property type="entry name" value="ADDB_N"/>
    <property type="match status" value="1"/>
</dbReference>
<dbReference type="Pfam" id="PF12705">
    <property type="entry name" value="PDDEXK_1"/>
    <property type="match status" value="1"/>
</dbReference>
<dbReference type="SUPFAM" id="SSF52540">
    <property type="entry name" value="P-loop containing nucleoside triphosphate hydrolases"/>
    <property type="match status" value="1"/>
</dbReference>
<dbReference type="SUPFAM" id="SSF52980">
    <property type="entry name" value="Restriction endonuclease-like"/>
    <property type="match status" value="1"/>
</dbReference>
<dbReference type="PROSITE" id="PS51198">
    <property type="entry name" value="UVRD_HELICASE_ATP_BIND"/>
    <property type="match status" value="1"/>
</dbReference>
<dbReference type="PROSITE" id="PS51217">
    <property type="entry name" value="UVRD_HELICASE_CTER"/>
    <property type="match status" value="1"/>
</dbReference>
<organism>
    <name type="scientific">Alkaliphilus metalliredigens (strain QYMF)</name>
    <dbReference type="NCBI Taxonomy" id="293826"/>
    <lineage>
        <taxon>Bacteria</taxon>
        <taxon>Bacillati</taxon>
        <taxon>Bacillota</taxon>
        <taxon>Clostridia</taxon>
        <taxon>Peptostreptococcales</taxon>
        <taxon>Natronincolaceae</taxon>
        <taxon>Alkaliphilus</taxon>
    </lineage>
</organism>
<sequence length="1149" mass="134509">MAIRYIFGRAGRGKSYLALEEIKQKLQEEEDNKLFLLVPEQFTLQAERDLIRKQELTGMMRAEVLSFTRLAHRVFSEVGGLTRVPINELGKNMILRKIADESLKELSIYQSIAKQDGFITKLNELICEMKQHDITPTELTMELNEIEEETILKRKLEDITLLYQRFNNYLKGQYVDNEDHVNLLIENIERVEFLEGAEIWIDGFQSFTPQIIRVIEKLAQKVANITITFTMELNAKEKDKDLFHITQKTYLKVKTIAQKFNLDEEVINLDIEERKVLPKEKEIAHIEREFNTYPYKQYADEIANLEIFAGSNLYSEMENVAAQIIHLVRNRGYRWNDIALVSGGLDQYSMILKRVFEEYHIPYFIDEKRSIMNNPMIELILSSIEILSRGYQYEDVFSFLKTGFSDLTKDEVEQLENYVLQYGIRGKAYSEPFTKGFEKKQIQQKDKEEGEKQIDEEKKEKYNELRMRFIAPFAKFEKRIYRKKKIGEITKALFEFMKELNIEDKLNQWIEELREEKYFEYVNENTQIWNKIMEIFDQLTEILADESATLKEYGRILEAGFLACKVGVIPSTIDQVLVGSIERSKSHDIKALFVVGVNDGVLPFGQEDGGILLDHERESLVKKGISIGTTLESSLLEEQFMIYSAFSKPTEYLWVSYALADQEGKAMRQSILIDRFKKLFKNLRIKSDVVNDVDRQLHLITTPISTFKYMTENIRQNVDDKAMADMWWDVYDWYSKEPTWEDRRKLMVKGLFHQNQITYIGENKAKSLYDNPIKSSVSRLERFANCPFSHFVTYGLRPKERKEYQLSNPDIGRLFHDSMEQFTKEMVNEEIQWKDLTKEKNDELVEKVIDEMVPDFEHGIMLSTHRYQYLVTRLKRISKRAMWTLTDHVKKGEFVPMGHEIIFGLEGDVPPIIIELANGEKIYLEGRIDRVDLLNDEEDGNYVKIIDYKSGSKEFSLSDVYYGLQIQLMVYLDAILSSEEKKHQVEIHPGGIFYFKIDDPMVKTTEKVVEEVEKEINKKLKMKGLVLKDVNIIKKMDRSIGRSSTIVPAGLTKDDEISKSSSALPEEDFKALLNHVRRLVKEIGEEMLKGNVKIEPFKKGGDTSCKYCDYIAICQFDNSFHDNQYKNIKELKSDEVLERIKKESQKKLE</sequence>
<keyword id="KW-0004">4Fe-4S</keyword>
<keyword id="KW-0067">ATP-binding</keyword>
<keyword id="KW-0227">DNA damage</keyword>
<keyword id="KW-0234">DNA repair</keyword>
<keyword id="KW-0238">DNA-binding</keyword>
<keyword id="KW-0269">Exonuclease</keyword>
<keyword id="KW-0347">Helicase</keyword>
<keyword id="KW-0378">Hydrolase</keyword>
<keyword id="KW-0408">Iron</keyword>
<keyword id="KW-0411">Iron-sulfur</keyword>
<keyword id="KW-0479">Metal-binding</keyword>
<keyword id="KW-0540">Nuclease</keyword>
<keyword id="KW-0547">Nucleotide-binding</keyword>
<keyword id="KW-1185">Reference proteome</keyword>
<reference key="1">
    <citation type="journal article" date="2016" name="Genome Announc.">
        <title>Complete genome sequence of Alkaliphilus metalliredigens strain QYMF, an alkaliphilic and metal-reducing bacterium isolated from borax-contaminated leachate ponds.</title>
        <authorList>
            <person name="Hwang C."/>
            <person name="Copeland A."/>
            <person name="Lucas S."/>
            <person name="Lapidus A."/>
            <person name="Barry K."/>
            <person name="Detter J.C."/>
            <person name="Glavina Del Rio T."/>
            <person name="Hammon N."/>
            <person name="Israni S."/>
            <person name="Dalin E."/>
            <person name="Tice H."/>
            <person name="Pitluck S."/>
            <person name="Chertkov O."/>
            <person name="Brettin T."/>
            <person name="Bruce D."/>
            <person name="Han C."/>
            <person name="Schmutz J."/>
            <person name="Larimer F."/>
            <person name="Land M.L."/>
            <person name="Hauser L."/>
            <person name="Kyrpides N."/>
            <person name="Mikhailova N."/>
            <person name="Ye Q."/>
            <person name="Zhou J."/>
            <person name="Richardson P."/>
            <person name="Fields M.W."/>
        </authorList>
    </citation>
    <scope>NUCLEOTIDE SEQUENCE [LARGE SCALE GENOMIC DNA]</scope>
    <source>
        <strain>QYMF</strain>
    </source>
</reference>
<name>ADDB_ALKMQ</name>
<gene>
    <name evidence="1" type="primary">addB</name>
    <name type="ordered locus">Amet_4176</name>
</gene>